<protein>
    <recommendedName>
        <fullName evidence="1">UPF0102 protein ABSDF1354</fullName>
    </recommendedName>
</protein>
<comment type="similarity">
    <text evidence="1">Belongs to the UPF0102 family.</text>
</comment>
<accession>B0VKV0</accession>
<dbReference type="EMBL" id="CU468230">
    <property type="protein sequence ID" value="CAP00700.1"/>
    <property type="molecule type" value="Genomic_DNA"/>
</dbReference>
<dbReference type="SMR" id="B0VKV0"/>
<dbReference type="KEGG" id="abm:ABSDF1354"/>
<dbReference type="HOGENOM" id="CLU_115353_1_1_6"/>
<dbReference type="BioCyc" id="ABAU509170:GCL9-1102-MONOMER"/>
<dbReference type="Proteomes" id="UP000001741">
    <property type="component" value="Chromosome"/>
</dbReference>
<dbReference type="GO" id="GO:0003676">
    <property type="term" value="F:nucleic acid binding"/>
    <property type="evidence" value="ECO:0007669"/>
    <property type="project" value="InterPro"/>
</dbReference>
<dbReference type="CDD" id="cd20736">
    <property type="entry name" value="PoNe_Nuclease"/>
    <property type="match status" value="1"/>
</dbReference>
<dbReference type="Gene3D" id="3.40.1350.10">
    <property type="match status" value="1"/>
</dbReference>
<dbReference type="HAMAP" id="MF_00048">
    <property type="entry name" value="UPF0102"/>
    <property type="match status" value="1"/>
</dbReference>
<dbReference type="InterPro" id="IPR011335">
    <property type="entry name" value="Restrct_endonuc-II-like"/>
</dbReference>
<dbReference type="InterPro" id="IPR011856">
    <property type="entry name" value="tRNA_endonuc-like_dom_sf"/>
</dbReference>
<dbReference type="InterPro" id="IPR003509">
    <property type="entry name" value="UPF0102_YraN-like"/>
</dbReference>
<dbReference type="NCBIfam" id="NF009150">
    <property type="entry name" value="PRK12497.1-3"/>
    <property type="match status" value="1"/>
</dbReference>
<dbReference type="NCBIfam" id="NF011267">
    <property type="entry name" value="PRK14674.1"/>
    <property type="match status" value="1"/>
</dbReference>
<dbReference type="NCBIfam" id="TIGR00252">
    <property type="entry name" value="YraN family protein"/>
    <property type="match status" value="1"/>
</dbReference>
<dbReference type="PANTHER" id="PTHR34039">
    <property type="entry name" value="UPF0102 PROTEIN YRAN"/>
    <property type="match status" value="1"/>
</dbReference>
<dbReference type="PANTHER" id="PTHR34039:SF1">
    <property type="entry name" value="UPF0102 PROTEIN YRAN"/>
    <property type="match status" value="1"/>
</dbReference>
<dbReference type="Pfam" id="PF02021">
    <property type="entry name" value="UPF0102"/>
    <property type="match status" value="1"/>
</dbReference>
<dbReference type="SUPFAM" id="SSF52980">
    <property type="entry name" value="Restriction endonuclease-like"/>
    <property type="match status" value="1"/>
</dbReference>
<name>Y1354_ACIBS</name>
<organism>
    <name type="scientific">Acinetobacter baumannii (strain SDF)</name>
    <dbReference type="NCBI Taxonomy" id="509170"/>
    <lineage>
        <taxon>Bacteria</taxon>
        <taxon>Pseudomonadati</taxon>
        <taxon>Pseudomonadota</taxon>
        <taxon>Gammaproteobacteria</taxon>
        <taxon>Moraxellales</taxon>
        <taxon>Moraxellaceae</taxon>
        <taxon>Acinetobacter</taxon>
        <taxon>Acinetobacter calcoaceticus/baumannii complex</taxon>
    </lineage>
</organism>
<reference key="1">
    <citation type="journal article" date="2008" name="PLoS ONE">
        <title>Comparative analysis of Acinetobacters: three genomes for three lifestyles.</title>
        <authorList>
            <person name="Vallenet D."/>
            <person name="Nordmann P."/>
            <person name="Barbe V."/>
            <person name="Poirel L."/>
            <person name="Mangenot S."/>
            <person name="Bataille E."/>
            <person name="Dossat C."/>
            <person name="Gas S."/>
            <person name="Kreimeyer A."/>
            <person name="Lenoble P."/>
            <person name="Oztas S."/>
            <person name="Poulain J."/>
            <person name="Segurens B."/>
            <person name="Robert C."/>
            <person name="Abergel C."/>
            <person name="Claverie J.-M."/>
            <person name="Raoult D."/>
            <person name="Medigue C."/>
            <person name="Weissenbach J."/>
            <person name="Cruveiller S."/>
        </authorList>
    </citation>
    <scope>NUCLEOTIDE SEQUENCE [LARGE SCALE GENOMIC DNA]</scope>
    <source>
        <strain>SDF</strain>
    </source>
</reference>
<evidence type="ECO:0000255" key="1">
    <source>
        <dbReference type="HAMAP-Rule" id="MF_00048"/>
    </source>
</evidence>
<feature type="chain" id="PRO_1000091221" description="UPF0102 protein ABSDF1354">
    <location>
        <begin position="1"/>
        <end position="133"/>
    </location>
</feature>
<sequence>MVVAQQLGQWAEQTALKLLKEQNYEWVASNYHSRRGEVDLIVKRGNELIFVEVKARGQGNYGQACEMVTLSKQKKIIKTAMRFLQRYPSYQDFYCRFDVICFDFPQKIAKTVQQDFSKFHYDLQWIENAFTLD</sequence>
<gene>
    <name type="ordered locus">ABSDF1354</name>
</gene>
<proteinExistence type="inferred from homology"/>